<name>HEM3_CLOAB</name>
<keyword id="KW-0627">Porphyrin biosynthesis</keyword>
<keyword id="KW-1185">Reference proteome</keyword>
<keyword id="KW-0808">Transferase</keyword>
<proteinExistence type="inferred from homology"/>
<dbReference type="EC" id="2.5.1.61" evidence="1"/>
<dbReference type="EMBL" id="AE001437">
    <property type="protein sequence ID" value="AAK78082.1"/>
    <property type="molecule type" value="Genomic_DNA"/>
</dbReference>
<dbReference type="PIR" id="G96911">
    <property type="entry name" value="G96911"/>
</dbReference>
<dbReference type="RefSeq" id="NP_346742.1">
    <property type="nucleotide sequence ID" value="NC_003030.1"/>
</dbReference>
<dbReference type="RefSeq" id="WP_010963424.1">
    <property type="nucleotide sequence ID" value="NC_003030.1"/>
</dbReference>
<dbReference type="SMR" id="Q97MU4"/>
<dbReference type="STRING" id="272562.CA_C0097"/>
<dbReference type="GeneID" id="44996579"/>
<dbReference type="KEGG" id="cac:CA_C0097"/>
<dbReference type="PATRIC" id="fig|272562.8.peg.280"/>
<dbReference type="eggNOG" id="COG0181">
    <property type="taxonomic scope" value="Bacteria"/>
</dbReference>
<dbReference type="HOGENOM" id="CLU_019704_1_0_9"/>
<dbReference type="OrthoDB" id="9810298at2"/>
<dbReference type="UniPathway" id="UPA00251">
    <property type="reaction ID" value="UER00319"/>
</dbReference>
<dbReference type="Proteomes" id="UP000000814">
    <property type="component" value="Chromosome"/>
</dbReference>
<dbReference type="GO" id="GO:0005737">
    <property type="term" value="C:cytoplasm"/>
    <property type="evidence" value="ECO:0007669"/>
    <property type="project" value="TreeGrafter"/>
</dbReference>
<dbReference type="GO" id="GO:0004418">
    <property type="term" value="F:hydroxymethylbilane synthase activity"/>
    <property type="evidence" value="ECO:0007669"/>
    <property type="project" value="UniProtKB-UniRule"/>
</dbReference>
<dbReference type="GO" id="GO:0006782">
    <property type="term" value="P:protoporphyrinogen IX biosynthetic process"/>
    <property type="evidence" value="ECO:0007669"/>
    <property type="project" value="UniProtKB-UniRule"/>
</dbReference>
<dbReference type="FunFam" id="3.40.190.10:FF:000005">
    <property type="entry name" value="Porphobilinogen deaminase"/>
    <property type="match status" value="1"/>
</dbReference>
<dbReference type="Gene3D" id="3.40.190.10">
    <property type="entry name" value="Periplasmic binding protein-like II"/>
    <property type="match status" value="2"/>
</dbReference>
<dbReference type="Gene3D" id="3.30.160.40">
    <property type="entry name" value="Porphobilinogen deaminase, C-terminal domain"/>
    <property type="match status" value="1"/>
</dbReference>
<dbReference type="HAMAP" id="MF_00260">
    <property type="entry name" value="Porphobil_deam"/>
    <property type="match status" value="1"/>
</dbReference>
<dbReference type="InterPro" id="IPR000860">
    <property type="entry name" value="HemC"/>
</dbReference>
<dbReference type="InterPro" id="IPR022417">
    <property type="entry name" value="Porphobilin_deaminase_N"/>
</dbReference>
<dbReference type="InterPro" id="IPR022418">
    <property type="entry name" value="Porphobilinogen_deaminase_C"/>
</dbReference>
<dbReference type="InterPro" id="IPR036803">
    <property type="entry name" value="Porphobilinogen_deaminase_C_sf"/>
</dbReference>
<dbReference type="NCBIfam" id="TIGR00212">
    <property type="entry name" value="hemC"/>
    <property type="match status" value="1"/>
</dbReference>
<dbReference type="PANTHER" id="PTHR11557">
    <property type="entry name" value="PORPHOBILINOGEN DEAMINASE"/>
    <property type="match status" value="1"/>
</dbReference>
<dbReference type="PANTHER" id="PTHR11557:SF0">
    <property type="entry name" value="PORPHOBILINOGEN DEAMINASE"/>
    <property type="match status" value="1"/>
</dbReference>
<dbReference type="Pfam" id="PF01379">
    <property type="entry name" value="Porphobil_deam"/>
    <property type="match status" value="1"/>
</dbReference>
<dbReference type="Pfam" id="PF03900">
    <property type="entry name" value="Porphobil_deamC"/>
    <property type="match status" value="1"/>
</dbReference>
<dbReference type="PIRSF" id="PIRSF001438">
    <property type="entry name" value="4pyrrol_synth_OHMeBilane_synth"/>
    <property type="match status" value="1"/>
</dbReference>
<dbReference type="PRINTS" id="PR00151">
    <property type="entry name" value="PORPHBDMNASE"/>
</dbReference>
<dbReference type="SUPFAM" id="SSF53850">
    <property type="entry name" value="Periplasmic binding protein-like II"/>
    <property type="match status" value="1"/>
</dbReference>
<dbReference type="SUPFAM" id="SSF54782">
    <property type="entry name" value="Porphobilinogen deaminase (hydroxymethylbilane synthase), C-terminal domain"/>
    <property type="match status" value="1"/>
</dbReference>
<protein>
    <recommendedName>
        <fullName evidence="1">Porphobilinogen deaminase</fullName>
        <shortName evidence="1">PBG</shortName>
        <ecNumber evidence="1">2.5.1.61</ecNumber>
    </recommendedName>
    <alternativeName>
        <fullName evidence="1">Hydroxymethylbilane synthase</fullName>
        <shortName evidence="1">HMBS</shortName>
    </alternativeName>
    <alternativeName>
        <fullName evidence="1">Pre-uroporphyrinogen synthase</fullName>
    </alternativeName>
</protein>
<comment type="function">
    <text evidence="1">Tetrapolymerization of the monopyrrole PBG into the hydroxymethylbilane pre-uroporphyrinogen in several discrete steps.</text>
</comment>
<comment type="catalytic activity">
    <reaction evidence="1">
        <text>4 porphobilinogen + H2O = hydroxymethylbilane + 4 NH4(+)</text>
        <dbReference type="Rhea" id="RHEA:13185"/>
        <dbReference type="ChEBI" id="CHEBI:15377"/>
        <dbReference type="ChEBI" id="CHEBI:28938"/>
        <dbReference type="ChEBI" id="CHEBI:57845"/>
        <dbReference type="ChEBI" id="CHEBI:58126"/>
        <dbReference type="EC" id="2.5.1.61"/>
    </reaction>
</comment>
<comment type="cofactor">
    <cofactor evidence="1">
        <name>dipyrromethane</name>
        <dbReference type="ChEBI" id="CHEBI:60342"/>
    </cofactor>
    <text evidence="1">Binds 1 dipyrromethane group covalently.</text>
</comment>
<comment type="pathway">
    <text evidence="1">Porphyrin-containing compound metabolism; protoporphyrin-IX biosynthesis; coproporphyrinogen-III from 5-aminolevulinate: step 2/4.</text>
</comment>
<comment type="subunit">
    <text evidence="1">Monomer.</text>
</comment>
<comment type="miscellaneous">
    <text evidence="1">The porphobilinogen subunits are added to the dipyrromethane group.</text>
</comment>
<comment type="similarity">
    <text evidence="1">Belongs to the HMBS family.</text>
</comment>
<organism>
    <name type="scientific">Clostridium acetobutylicum (strain ATCC 824 / DSM 792 / JCM 1419 / IAM 19013 / LMG 5710 / NBRC 13948 / NRRL B-527 / VKM B-1787 / 2291 / W)</name>
    <dbReference type="NCBI Taxonomy" id="272562"/>
    <lineage>
        <taxon>Bacteria</taxon>
        <taxon>Bacillati</taxon>
        <taxon>Bacillota</taxon>
        <taxon>Clostridia</taxon>
        <taxon>Eubacteriales</taxon>
        <taxon>Clostridiaceae</taxon>
        <taxon>Clostridium</taxon>
    </lineage>
</organism>
<sequence length="291" mass="32551">MKLTIATRKSKLAQVQTELIINVLKDKYGISSEKLLMETLGDKILDKSLADIGGKGLFIKDIERILLEDKADAAVHSMKDVPFEVPDMFEIAAVTLRVDVRDVFVSRDGTHFKDLKNGAVIGTSSNRRAAQLKMLRDDIKVVPIRGNVQTRIRKMGEEKLDGIILAAAGLKRLNMENIITDYFSVEEMIPAVGQGALGVEIKKENKNRDLFRKLDNKNSRMCVEAERSFMRTLNGDCHSTIGAYAEIVNGQMNVLGFYEIDGRRVKKDVSGNIEDYMSLGKTLAEKILEDK</sequence>
<accession>Q97MU4</accession>
<feature type="chain" id="PRO_0000142925" description="Porphobilinogen deaminase">
    <location>
        <begin position="1"/>
        <end position="291"/>
    </location>
</feature>
<feature type="modified residue" description="S-(dipyrrolylmethanemethyl)cysteine" evidence="1">
    <location>
        <position position="237"/>
    </location>
</feature>
<gene>
    <name evidence="1" type="primary">hemC</name>
    <name type="ordered locus">CA_C0097</name>
</gene>
<evidence type="ECO:0000255" key="1">
    <source>
        <dbReference type="HAMAP-Rule" id="MF_00260"/>
    </source>
</evidence>
<reference key="1">
    <citation type="journal article" date="2001" name="J. Bacteriol.">
        <title>Genome sequence and comparative analysis of the solvent-producing bacterium Clostridium acetobutylicum.</title>
        <authorList>
            <person name="Noelling J."/>
            <person name="Breton G."/>
            <person name="Omelchenko M.V."/>
            <person name="Makarova K.S."/>
            <person name="Zeng Q."/>
            <person name="Gibson R."/>
            <person name="Lee H.M."/>
            <person name="Dubois J."/>
            <person name="Qiu D."/>
            <person name="Hitti J."/>
            <person name="Wolf Y.I."/>
            <person name="Tatusov R.L."/>
            <person name="Sabathe F."/>
            <person name="Doucette-Stamm L.A."/>
            <person name="Soucaille P."/>
            <person name="Daly M.J."/>
            <person name="Bennett G.N."/>
            <person name="Koonin E.V."/>
            <person name="Smith D.R."/>
        </authorList>
    </citation>
    <scope>NUCLEOTIDE SEQUENCE [LARGE SCALE GENOMIC DNA]</scope>
    <source>
        <strain>ATCC 824 / DSM 792 / JCM 1419 / IAM 19013 / LMG 5710 / NBRC 13948 / NRRL B-527 / VKM B-1787 / 2291 / W</strain>
    </source>
</reference>